<gene>
    <name evidence="1" type="primary">groEL</name>
    <name evidence="1" type="synonym">groL</name>
    <name type="ordered locus">SA1836</name>
</gene>
<name>CH60_STAAN</name>
<reference key="1">
    <citation type="journal article" date="2001" name="Lancet">
        <title>Whole genome sequencing of meticillin-resistant Staphylococcus aureus.</title>
        <authorList>
            <person name="Kuroda M."/>
            <person name="Ohta T."/>
            <person name="Uchiyama I."/>
            <person name="Baba T."/>
            <person name="Yuzawa H."/>
            <person name="Kobayashi I."/>
            <person name="Cui L."/>
            <person name="Oguchi A."/>
            <person name="Aoki K."/>
            <person name="Nagai Y."/>
            <person name="Lian J.-Q."/>
            <person name="Ito T."/>
            <person name="Kanamori M."/>
            <person name="Matsumaru H."/>
            <person name="Maruyama A."/>
            <person name="Murakami H."/>
            <person name="Hosoyama A."/>
            <person name="Mizutani-Ui Y."/>
            <person name="Takahashi N.K."/>
            <person name="Sawano T."/>
            <person name="Inoue R."/>
            <person name="Kaito C."/>
            <person name="Sekimizu K."/>
            <person name="Hirakawa H."/>
            <person name="Kuhara S."/>
            <person name="Goto S."/>
            <person name="Yabuzaki J."/>
            <person name="Kanehisa M."/>
            <person name="Yamashita A."/>
            <person name="Oshima K."/>
            <person name="Furuya K."/>
            <person name="Yoshino C."/>
            <person name="Shiba T."/>
            <person name="Hattori M."/>
            <person name="Ogasawara N."/>
            <person name="Hayashi H."/>
            <person name="Hiramatsu K."/>
        </authorList>
    </citation>
    <scope>NUCLEOTIDE SEQUENCE [LARGE SCALE GENOMIC DNA]</scope>
    <source>
        <strain>N315</strain>
    </source>
</reference>
<reference key="2">
    <citation type="journal article" date="2005" name="J. Microbiol. Methods">
        <title>Correlation of proteomic and transcriptomic profiles of Staphylococcus aureus during the post-exponential phase of growth.</title>
        <authorList>
            <person name="Scherl A."/>
            <person name="Francois P."/>
            <person name="Bento M."/>
            <person name="Deshusses J.M."/>
            <person name="Charbonnier Y."/>
            <person name="Converset V."/>
            <person name="Huyghe A."/>
            <person name="Walter N."/>
            <person name="Hoogland C."/>
            <person name="Appel R.D."/>
            <person name="Sanchez J.-C."/>
            <person name="Zimmermann-Ivol C.G."/>
            <person name="Corthals G.L."/>
            <person name="Hochstrasser D.F."/>
            <person name="Schrenzel J."/>
        </authorList>
    </citation>
    <scope>IDENTIFICATION BY MASS SPECTROMETRY</scope>
    <source>
        <strain>N315</strain>
    </source>
</reference>
<reference key="3">
    <citation type="submission" date="2007-10" db="UniProtKB">
        <title>Shotgun proteomic analysis of total and membrane protein extracts of S. aureus strain N315.</title>
        <authorList>
            <person name="Vaezzadeh A.R."/>
            <person name="Deshusses J."/>
            <person name="Lescuyer P."/>
            <person name="Hochstrasser D.F."/>
        </authorList>
    </citation>
    <scope>IDENTIFICATION BY MASS SPECTROMETRY [LARGE SCALE ANALYSIS]</scope>
    <source>
        <strain>N315</strain>
    </source>
</reference>
<dbReference type="EC" id="5.6.1.7" evidence="1"/>
<dbReference type="EMBL" id="BA000018">
    <property type="protein sequence ID" value="BAB43116.1"/>
    <property type="molecule type" value="Genomic_DNA"/>
</dbReference>
<dbReference type="PIR" id="C89994">
    <property type="entry name" value="C89994"/>
</dbReference>
<dbReference type="RefSeq" id="WP_000240642.1">
    <property type="nucleotide sequence ID" value="NC_002745.2"/>
</dbReference>
<dbReference type="SMR" id="P99083"/>
<dbReference type="EnsemblBacteria" id="BAB43116">
    <property type="protein sequence ID" value="BAB43116"/>
    <property type="gene ID" value="BAB43116"/>
</dbReference>
<dbReference type="KEGG" id="sau:SA1836"/>
<dbReference type="HOGENOM" id="CLU_016503_3_0_9"/>
<dbReference type="GO" id="GO:0005737">
    <property type="term" value="C:cytoplasm"/>
    <property type="evidence" value="ECO:0007669"/>
    <property type="project" value="UniProtKB-SubCell"/>
</dbReference>
<dbReference type="GO" id="GO:0005524">
    <property type="term" value="F:ATP binding"/>
    <property type="evidence" value="ECO:0007669"/>
    <property type="project" value="UniProtKB-UniRule"/>
</dbReference>
<dbReference type="GO" id="GO:0140662">
    <property type="term" value="F:ATP-dependent protein folding chaperone"/>
    <property type="evidence" value="ECO:0007669"/>
    <property type="project" value="InterPro"/>
</dbReference>
<dbReference type="GO" id="GO:0016853">
    <property type="term" value="F:isomerase activity"/>
    <property type="evidence" value="ECO:0007669"/>
    <property type="project" value="UniProtKB-KW"/>
</dbReference>
<dbReference type="GO" id="GO:0051082">
    <property type="term" value="F:unfolded protein binding"/>
    <property type="evidence" value="ECO:0007669"/>
    <property type="project" value="UniProtKB-UniRule"/>
</dbReference>
<dbReference type="GO" id="GO:0042026">
    <property type="term" value="P:protein refolding"/>
    <property type="evidence" value="ECO:0007669"/>
    <property type="project" value="UniProtKB-UniRule"/>
</dbReference>
<dbReference type="CDD" id="cd03344">
    <property type="entry name" value="GroEL"/>
    <property type="match status" value="1"/>
</dbReference>
<dbReference type="FunFam" id="1.10.560.10:FF:000001">
    <property type="entry name" value="60 kDa chaperonin"/>
    <property type="match status" value="1"/>
</dbReference>
<dbReference type="FunFam" id="3.50.7.10:FF:000001">
    <property type="entry name" value="60 kDa chaperonin"/>
    <property type="match status" value="1"/>
</dbReference>
<dbReference type="Gene3D" id="3.50.7.10">
    <property type="entry name" value="GroEL"/>
    <property type="match status" value="1"/>
</dbReference>
<dbReference type="Gene3D" id="1.10.560.10">
    <property type="entry name" value="GroEL-like equatorial domain"/>
    <property type="match status" value="1"/>
</dbReference>
<dbReference type="Gene3D" id="3.30.260.10">
    <property type="entry name" value="TCP-1-like chaperonin intermediate domain"/>
    <property type="match status" value="1"/>
</dbReference>
<dbReference type="HAMAP" id="MF_00600">
    <property type="entry name" value="CH60"/>
    <property type="match status" value="1"/>
</dbReference>
<dbReference type="InterPro" id="IPR018370">
    <property type="entry name" value="Chaperonin_Cpn60_CS"/>
</dbReference>
<dbReference type="InterPro" id="IPR001844">
    <property type="entry name" value="Cpn60/GroEL"/>
</dbReference>
<dbReference type="InterPro" id="IPR002423">
    <property type="entry name" value="Cpn60/GroEL/TCP-1"/>
</dbReference>
<dbReference type="InterPro" id="IPR027409">
    <property type="entry name" value="GroEL-like_apical_dom_sf"/>
</dbReference>
<dbReference type="InterPro" id="IPR027413">
    <property type="entry name" value="GROEL-like_equatorial_sf"/>
</dbReference>
<dbReference type="InterPro" id="IPR027410">
    <property type="entry name" value="TCP-1-like_intermed_sf"/>
</dbReference>
<dbReference type="NCBIfam" id="TIGR02348">
    <property type="entry name" value="GroEL"/>
    <property type="match status" value="1"/>
</dbReference>
<dbReference type="NCBIfam" id="NF000592">
    <property type="entry name" value="PRK00013.1"/>
    <property type="match status" value="1"/>
</dbReference>
<dbReference type="NCBIfam" id="NF009487">
    <property type="entry name" value="PRK12849.1"/>
    <property type="match status" value="1"/>
</dbReference>
<dbReference type="NCBIfam" id="NF009488">
    <property type="entry name" value="PRK12850.1"/>
    <property type="match status" value="1"/>
</dbReference>
<dbReference type="NCBIfam" id="NF009489">
    <property type="entry name" value="PRK12851.1"/>
    <property type="match status" value="1"/>
</dbReference>
<dbReference type="PANTHER" id="PTHR45633">
    <property type="entry name" value="60 KDA HEAT SHOCK PROTEIN, MITOCHONDRIAL"/>
    <property type="match status" value="1"/>
</dbReference>
<dbReference type="Pfam" id="PF00118">
    <property type="entry name" value="Cpn60_TCP1"/>
    <property type="match status" value="1"/>
</dbReference>
<dbReference type="PRINTS" id="PR00298">
    <property type="entry name" value="CHAPERONIN60"/>
</dbReference>
<dbReference type="SUPFAM" id="SSF52029">
    <property type="entry name" value="GroEL apical domain-like"/>
    <property type="match status" value="1"/>
</dbReference>
<dbReference type="SUPFAM" id="SSF48592">
    <property type="entry name" value="GroEL equatorial domain-like"/>
    <property type="match status" value="1"/>
</dbReference>
<dbReference type="SUPFAM" id="SSF54849">
    <property type="entry name" value="GroEL-intermediate domain like"/>
    <property type="match status" value="1"/>
</dbReference>
<dbReference type="PROSITE" id="PS00296">
    <property type="entry name" value="CHAPERONINS_CPN60"/>
    <property type="match status" value="1"/>
</dbReference>
<keyword id="KW-0067">ATP-binding</keyword>
<keyword id="KW-0143">Chaperone</keyword>
<keyword id="KW-0963">Cytoplasm</keyword>
<keyword id="KW-0413">Isomerase</keyword>
<keyword id="KW-0547">Nucleotide-binding</keyword>
<accession>P99083</accession>
<accession>Q99SL7</accession>
<proteinExistence type="evidence at protein level"/>
<comment type="function">
    <text evidence="1">Together with its co-chaperonin GroES, plays an essential role in assisting protein folding. The GroEL-GroES system forms a nano-cage that allows encapsulation of the non-native substrate proteins and provides a physical environment optimized to promote and accelerate protein folding.</text>
</comment>
<comment type="catalytic activity">
    <reaction evidence="1">
        <text>ATP + H2O + a folded polypeptide = ADP + phosphate + an unfolded polypeptide.</text>
        <dbReference type="EC" id="5.6.1.7"/>
    </reaction>
</comment>
<comment type="subunit">
    <text evidence="1">Forms a cylinder of 14 subunits composed of two heptameric rings stacked back-to-back. Interacts with the co-chaperonin GroES.</text>
</comment>
<comment type="subcellular location">
    <subcellularLocation>
        <location evidence="1">Cytoplasm</location>
    </subcellularLocation>
</comment>
<comment type="similarity">
    <text evidence="1">Belongs to the chaperonin (HSP60) family.</text>
</comment>
<evidence type="ECO:0000255" key="1">
    <source>
        <dbReference type="HAMAP-Rule" id="MF_00600"/>
    </source>
</evidence>
<organism>
    <name type="scientific">Staphylococcus aureus (strain N315)</name>
    <dbReference type="NCBI Taxonomy" id="158879"/>
    <lineage>
        <taxon>Bacteria</taxon>
        <taxon>Bacillati</taxon>
        <taxon>Bacillota</taxon>
        <taxon>Bacilli</taxon>
        <taxon>Bacillales</taxon>
        <taxon>Staphylococcaceae</taxon>
        <taxon>Staphylococcus</taxon>
    </lineage>
</organism>
<feature type="chain" id="PRO_0000063533" description="Chaperonin GroEL">
    <location>
        <begin position="1"/>
        <end position="538"/>
    </location>
</feature>
<feature type="binding site" evidence="1">
    <location>
        <begin position="29"/>
        <end position="32"/>
    </location>
    <ligand>
        <name>ATP</name>
        <dbReference type="ChEBI" id="CHEBI:30616"/>
    </ligand>
</feature>
<feature type="binding site" evidence="1">
    <location>
        <begin position="86"/>
        <end position="90"/>
    </location>
    <ligand>
        <name>ATP</name>
        <dbReference type="ChEBI" id="CHEBI:30616"/>
    </ligand>
</feature>
<feature type="binding site" evidence="1">
    <location>
        <position position="413"/>
    </location>
    <ligand>
        <name>ATP</name>
        <dbReference type="ChEBI" id="CHEBI:30616"/>
    </ligand>
</feature>
<feature type="binding site" evidence="1">
    <location>
        <begin position="476"/>
        <end position="478"/>
    </location>
    <ligand>
        <name>ATP</name>
        <dbReference type="ChEBI" id="CHEBI:30616"/>
    </ligand>
</feature>
<feature type="binding site" evidence="1">
    <location>
        <position position="492"/>
    </location>
    <ligand>
        <name>ATP</name>
        <dbReference type="ChEBI" id="CHEBI:30616"/>
    </ligand>
</feature>
<protein>
    <recommendedName>
        <fullName evidence="1">Chaperonin GroEL</fullName>
        <ecNumber evidence="1">5.6.1.7</ecNumber>
    </recommendedName>
    <alternativeName>
        <fullName evidence="1">60 kDa chaperonin</fullName>
    </alternativeName>
    <alternativeName>
        <fullName evidence="1">Chaperonin-60</fullName>
        <shortName evidence="1">Cpn60</shortName>
    </alternativeName>
</protein>
<sequence>MVKQLKFSEDARQAMLRGVDQLANAVKVTIGPKGRNVVLDKEFTAPLITNDGVTIAKEIELEDPYENMGAKLVQEVANKTNEIAGDGTTTATVLAQAMIQEGLKNVTSGANPVGLRQGIDKAVKVAVEALHENSQKVENKNEIAQVGAISAADEEIGRYISEAMEKVGNDGVITIEESNGLNTELEVVEGMQFDRGYQSPYMVTDSDKMVAELERPYILVTDKKISSFQDILPLLEQVVQSNRPILIVADEVEGDALTNIVLNRMRGTFTAVAVKAPGFGDRRKAMLEDLAILTGAQVITDDLGLDLKDASIDMLGTASKVEVTKDNTTVVDGDGDENSIDARVSQLKSQIEETESDFDREKLQERLAKLAGGVAVIKVGAASETELKERKLRIEDALNSTRAAVEEGIVAGGGTALVNVYQKVSEIEAEGDIETGVNIVLKALTAPVRQIAENAGLEGSVIVERLKNAEPGVGFNAATNEWVNMLEAGIVDPTKVTRSALQHAASVAAMFLTTEAVVASIPEKNNDQPNMGGMPGMM</sequence>